<feature type="chain" id="PRO_1000206087" description="Ketol-acid reductoisomerase (NADP(+))">
    <location>
        <begin position="1"/>
        <end position="337"/>
    </location>
</feature>
<feature type="domain" description="KARI N-terminal Rossmann" evidence="2">
    <location>
        <begin position="3"/>
        <end position="183"/>
    </location>
</feature>
<feature type="domain" description="KARI C-terminal knotted" evidence="3">
    <location>
        <begin position="184"/>
        <end position="329"/>
    </location>
</feature>
<feature type="active site" evidence="1">
    <location>
        <position position="109"/>
    </location>
</feature>
<feature type="binding site" evidence="1">
    <location>
        <begin position="26"/>
        <end position="29"/>
    </location>
    <ligand>
        <name>NADP(+)</name>
        <dbReference type="ChEBI" id="CHEBI:58349"/>
    </ligand>
</feature>
<feature type="binding site" evidence="1">
    <location>
        <position position="49"/>
    </location>
    <ligand>
        <name>NADP(+)</name>
        <dbReference type="ChEBI" id="CHEBI:58349"/>
    </ligand>
</feature>
<feature type="binding site" evidence="1">
    <location>
        <position position="52"/>
    </location>
    <ligand>
        <name>NADP(+)</name>
        <dbReference type="ChEBI" id="CHEBI:58349"/>
    </ligand>
</feature>
<feature type="binding site" evidence="1">
    <location>
        <position position="54"/>
    </location>
    <ligand>
        <name>NADP(+)</name>
        <dbReference type="ChEBI" id="CHEBI:58349"/>
    </ligand>
</feature>
<feature type="binding site" evidence="1">
    <location>
        <begin position="84"/>
        <end position="87"/>
    </location>
    <ligand>
        <name>NADP(+)</name>
        <dbReference type="ChEBI" id="CHEBI:58349"/>
    </ligand>
</feature>
<feature type="binding site" evidence="1">
    <location>
        <position position="135"/>
    </location>
    <ligand>
        <name>NADP(+)</name>
        <dbReference type="ChEBI" id="CHEBI:58349"/>
    </ligand>
</feature>
<feature type="binding site" evidence="1">
    <location>
        <position position="192"/>
    </location>
    <ligand>
        <name>Mg(2+)</name>
        <dbReference type="ChEBI" id="CHEBI:18420"/>
        <label>1</label>
    </ligand>
</feature>
<feature type="binding site" evidence="1">
    <location>
        <position position="192"/>
    </location>
    <ligand>
        <name>Mg(2+)</name>
        <dbReference type="ChEBI" id="CHEBI:18420"/>
        <label>2</label>
    </ligand>
</feature>
<feature type="binding site" evidence="1">
    <location>
        <position position="196"/>
    </location>
    <ligand>
        <name>Mg(2+)</name>
        <dbReference type="ChEBI" id="CHEBI:18420"/>
        <label>1</label>
    </ligand>
</feature>
<feature type="binding site" evidence="1">
    <location>
        <position position="228"/>
    </location>
    <ligand>
        <name>Mg(2+)</name>
        <dbReference type="ChEBI" id="CHEBI:18420"/>
        <label>2</label>
    </ligand>
</feature>
<feature type="binding site" evidence="1">
    <location>
        <position position="232"/>
    </location>
    <ligand>
        <name>Mg(2+)</name>
        <dbReference type="ChEBI" id="CHEBI:18420"/>
        <label>2</label>
    </ligand>
</feature>
<feature type="binding site" evidence="1">
    <location>
        <position position="253"/>
    </location>
    <ligand>
        <name>substrate</name>
    </ligand>
</feature>
<dbReference type="EC" id="1.1.1.86" evidence="1"/>
<dbReference type="EMBL" id="AP008957">
    <property type="protein sequence ID" value="BAH33107.1"/>
    <property type="molecule type" value="Genomic_DNA"/>
</dbReference>
<dbReference type="SMR" id="C0ZXM2"/>
<dbReference type="KEGG" id="rer:RER_23990"/>
<dbReference type="eggNOG" id="COG0059">
    <property type="taxonomic scope" value="Bacteria"/>
</dbReference>
<dbReference type="HOGENOM" id="CLU_033821_0_1_11"/>
<dbReference type="UniPathway" id="UPA00047">
    <property type="reaction ID" value="UER00056"/>
</dbReference>
<dbReference type="UniPathway" id="UPA00049">
    <property type="reaction ID" value="UER00060"/>
</dbReference>
<dbReference type="Proteomes" id="UP000002204">
    <property type="component" value="Chromosome"/>
</dbReference>
<dbReference type="GO" id="GO:0005829">
    <property type="term" value="C:cytosol"/>
    <property type="evidence" value="ECO:0007669"/>
    <property type="project" value="TreeGrafter"/>
</dbReference>
<dbReference type="GO" id="GO:0004455">
    <property type="term" value="F:ketol-acid reductoisomerase activity"/>
    <property type="evidence" value="ECO:0007669"/>
    <property type="project" value="UniProtKB-UniRule"/>
</dbReference>
<dbReference type="GO" id="GO:0000287">
    <property type="term" value="F:magnesium ion binding"/>
    <property type="evidence" value="ECO:0007669"/>
    <property type="project" value="UniProtKB-UniRule"/>
</dbReference>
<dbReference type="GO" id="GO:0050661">
    <property type="term" value="F:NADP binding"/>
    <property type="evidence" value="ECO:0007669"/>
    <property type="project" value="InterPro"/>
</dbReference>
<dbReference type="GO" id="GO:0009097">
    <property type="term" value="P:isoleucine biosynthetic process"/>
    <property type="evidence" value="ECO:0007669"/>
    <property type="project" value="UniProtKB-UniRule"/>
</dbReference>
<dbReference type="GO" id="GO:0009099">
    <property type="term" value="P:L-valine biosynthetic process"/>
    <property type="evidence" value="ECO:0007669"/>
    <property type="project" value="UniProtKB-UniRule"/>
</dbReference>
<dbReference type="FunFam" id="3.40.50.720:FF:000023">
    <property type="entry name" value="Ketol-acid reductoisomerase (NADP(+))"/>
    <property type="match status" value="1"/>
</dbReference>
<dbReference type="Gene3D" id="6.10.240.10">
    <property type="match status" value="1"/>
</dbReference>
<dbReference type="Gene3D" id="3.40.50.720">
    <property type="entry name" value="NAD(P)-binding Rossmann-like Domain"/>
    <property type="match status" value="1"/>
</dbReference>
<dbReference type="HAMAP" id="MF_00435">
    <property type="entry name" value="IlvC"/>
    <property type="match status" value="1"/>
</dbReference>
<dbReference type="InterPro" id="IPR008927">
    <property type="entry name" value="6-PGluconate_DH-like_C_sf"/>
</dbReference>
<dbReference type="InterPro" id="IPR013023">
    <property type="entry name" value="KARI"/>
</dbReference>
<dbReference type="InterPro" id="IPR000506">
    <property type="entry name" value="KARI_C"/>
</dbReference>
<dbReference type="InterPro" id="IPR013116">
    <property type="entry name" value="KARI_N"/>
</dbReference>
<dbReference type="InterPro" id="IPR014359">
    <property type="entry name" value="KARI_prok"/>
</dbReference>
<dbReference type="InterPro" id="IPR036291">
    <property type="entry name" value="NAD(P)-bd_dom_sf"/>
</dbReference>
<dbReference type="NCBIfam" id="TIGR00465">
    <property type="entry name" value="ilvC"/>
    <property type="match status" value="1"/>
</dbReference>
<dbReference type="NCBIfam" id="NF004017">
    <property type="entry name" value="PRK05479.1"/>
    <property type="match status" value="1"/>
</dbReference>
<dbReference type="NCBIfam" id="NF009940">
    <property type="entry name" value="PRK13403.1"/>
    <property type="match status" value="1"/>
</dbReference>
<dbReference type="PANTHER" id="PTHR21371">
    <property type="entry name" value="KETOL-ACID REDUCTOISOMERASE, MITOCHONDRIAL"/>
    <property type="match status" value="1"/>
</dbReference>
<dbReference type="PANTHER" id="PTHR21371:SF1">
    <property type="entry name" value="KETOL-ACID REDUCTOISOMERASE, MITOCHONDRIAL"/>
    <property type="match status" value="1"/>
</dbReference>
<dbReference type="Pfam" id="PF01450">
    <property type="entry name" value="KARI_C"/>
    <property type="match status" value="1"/>
</dbReference>
<dbReference type="Pfam" id="PF07991">
    <property type="entry name" value="KARI_N"/>
    <property type="match status" value="1"/>
</dbReference>
<dbReference type="PIRSF" id="PIRSF000116">
    <property type="entry name" value="IlvC_gammaproteo"/>
    <property type="match status" value="1"/>
</dbReference>
<dbReference type="SUPFAM" id="SSF48179">
    <property type="entry name" value="6-phosphogluconate dehydrogenase C-terminal domain-like"/>
    <property type="match status" value="1"/>
</dbReference>
<dbReference type="SUPFAM" id="SSF51735">
    <property type="entry name" value="NAD(P)-binding Rossmann-fold domains"/>
    <property type="match status" value="1"/>
</dbReference>
<dbReference type="PROSITE" id="PS51851">
    <property type="entry name" value="KARI_C"/>
    <property type="match status" value="1"/>
</dbReference>
<dbReference type="PROSITE" id="PS51850">
    <property type="entry name" value="KARI_N"/>
    <property type="match status" value="1"/>
</dbReference>
<proteinExistence type="inferred from homology"/>
<organism>
    <name type="scientific">Rhodococcus erythropolis (strain PR4 / NBRC 100887)</name>
    <dbReference type="NCBI Taxonomy" id="234621"/>
    <lineage>
        <taxon>Bacteria</taxon>
        <taxon>Bacillati</taxon>
        <taxon>Actinomycetota</taxon>
        <taxon>Actinomycetes</taxon>
        <taxon>Mycobacteriales</taxon>
        <taxon>Nocardiaceae</taxon>
        <taxon>Rhodococcus</taxon>
        <taxon>Rhodococcus erythropolis group</taxon>
    </lineage>
</organism>
<gene>
    <name evidence="1" type="primary">ilvC</name>
    <name type="ordered locus">RER_23990</name>
</gene>
<accession>C0ZXM2</accession>
<name>ILVC_RHOE4</name>
<keyword id="KW-0028">Amino-acid biosynthesis</keyword>
<keyword id="KW-0100">Branched-chain amino acid biosynthesis</keyword>
<keyword id="KW-0460">Magnesium</keyword>
<keyword id="KW-0479">Metal-binding</keyword>
<keyword id="KW-0521">NADP</keyword>
<keyword id="KW-0560">Oxidoreductase</keyword>
<reference key="1">
    <citation type="submission" date="2005-03" db="EMBL/GenBank/DDBJ databases">
        <title>Comparison of the complete genome sequences of Rhodococcus erythropolis PR4 and Rhodococcus opacus B4.</title>
        <authorList>
            <person name="Takarada H."/>
            <person name="Sekine M."/>
            <person name="Hosoyama A."/>
            <person name="Yamada R."/>
            <person name="Fujisawa T."/>
            <person name="Omata S."/>
            <person name="Shimizu A."/>
            <person name="Tsukatani N."/>
            <person name="Tanikawa S."/>
            <person name="Fujita N."/>
            <person name="Harayama S."/>
        </authorList>
    </citation>
    <scope>NUCLEOTIDE SEQUENCE [LARGE SCALE GENOMIC DNA]</scope>
    <source>
        <strain>PR4 / NBRC 100887</strain>
    </source>
</reference>
<protein>
    <recommendedName>
        <fullName evidence="1">Ketol-acid reductoisomerase (NADP(+))</fullName>
        <shortName evidence="1">KARI</shortName>
        <ecNumber evidence="1">1.1.1.86</ecNumber>
    </recommendedName>
    <alternativeName>
        <fullName evidence="1">Acetohydroxy-acid isomeroreductase</fullName>
        <shortName evidence="1">AHIR</shortName>
    </alternativeName>
    <alternativeName>
        <fullName evidence="1">Alpha-keto-beta-hydroxylacyl reductoisomerase</fullName>
    </alternativeName>
    <alternativeName>
        <fullName evidence="1">Ketol-acid reductoisomerase type 1</fullName>
    </alternativeName>
    <alternativeName>
        <fullName evidence="1">Ketol-acid reductoisomerase type I</fullName>
    </alternativeName>
</protein>
<comment type="function">
    <text evidence="1">Involved in the biosynthesis of branched-chain amino acids (BCAA). Catalyzes an alkyl-migration followed by a ketol-acid reduction of (S)-2-acetolactate (S2AL) to yield (R)-2,3-dihydroxy-isovalerate. In the isomerase reaction, S2AL is rearranged via a Mg-dependent methyl migration to produce 3-hydroxy-3-methyl-2-ketobutyrate (HMKB). In the reductase reaction, this 2-ketoacid undergoes a metal-dependent reduction by NADPH to yield (R)-2,3-dihydroxy-isovalerate.</text>
</comment>
<comment type="catalytic activity">
    <reaction evidence="1">
        <text>(2R)-2,3-dihydroxy-3-methylbutanoate + NADP(+) = (2S)-2-acetolactate + NADPH + H(+)</text>
        <dbReference type="Rhea" id="RHEA:22068"/>
        <dbReference type="ChEBI" id="CHEBI:15378"/>
        <dbReference type="ChEBI" id="CHEBI:49072"/>
        <dbReference type="ChEBI" id="CHEBI:57783"/>
        <dbReference type="ChEBI" id="CHEBI:58349"/>
        <dbReference type="ChEBI" id="CHEBI:58476"/>
        <dbReference type="EC" id="1.1.1.86"/>
    </reaction>
</comment>
<comment type="catalytic activity">
    <reaction evidence="1">
        <text>(2R,3R)-2,3-dihydroxy-3-methylpentanoate + NADP(+) = (S)-2-ethyl-2-hydroxy-3-oxobutanoate + NADPH + H(+)</text>
        <dbReference type="Rhea" id="RHEA:13493"/>
        <dbReference type="ChEBI" id="CHEBI:15378"/>
        <dbReference type="ChEBI" id="CHEBI:49256"/>
        <dbReference type="ChEBI" id="CHEBI:49258"/>
        <dbReference type="ChEBI" id="CHEBI:57783"/>
        <dbReference type="ChEBI" id="CHEBI:58349"/>
        <dbReference type="EC" id="1.1.1.86"/>
    </reaction>
</comment>
<comment type="cofactor">
    <cofactor evidence="1">
        <name>Mg(2+)</name>
        <dbReference type="ChEBI" id="CHEBI:18420"/>
    </cofactor>
    <text evidence="1">Binds 2 magnesium ions per subunit.</text>
</comment>
<comment type="pathway">
    <text evidence="1">Amino-acid biosynthesis; L-isoleucine biosynthesis; L-isoleucine from 2-oxobutanoate: step 2/4.</text>
</comment>
<comment type="pathway">
    <text evidence="1">Amino-acid biosynthesis; L-valine biosynthesis; L-valine from pyruvate: step 2/4.</text>
</comment>
<comment type="similarity">
    <text evidence="1">Belongs to the ketol-acid reductoisomerase family.</text>
</comment>
<evidence type="ECO:0000255" key="1">
    <source>
        <dbReference type="HAMAP-Rule" id="MF_00435"/>
    </source>
</evidence>
<evidence type="ECO:0000255" key="2">
    <source>
        <dbReference type="PROSITE-ProRule" id="PRU01197"/>
    </source>
</evidence>
<evidence type="ECO:0000255" key="3">
    <source>
        <dbReference type="PROSITE-ProRule" id="PRU01198"/>
    </source>
</evidence>
<sequence length="337" mass="36462">MAVEMFYDDDADLSIIQGRKVAVIGYGSQGHAHSLSLRDSGVDVRIGLKEGSKSREKAQEQGLTVGTPAEVSEWADVIMVLAPDTAQASIFTNDIEPNLKDGDALFFGHGLNIHFDLIKAPEFVTVGMVAPKGPGHLVRRQFVDGKGVPALIAIDQDPKGEGQALALSYAKGIGGTRAGVIKTTFKEETETDLFGEQAVLCGGTEELVKTGFEVMVEAGYAPEMAYFEVLHELKLIVDLMYEGGIARMNYSVSDTAEFGGYLSGPRVIDADTKERMKAILADIQSGEFTRRLVANVENGNTELEGLRKANAEHPIEVTGKKLRDLMSWVDRPITETA</sequence>